<name>CH10_SALSV</name>
<gene>
    <name evidence="1" type="primary">groES</name>
    <name evidence="1" type="synonym">groS</name>
    <name type="ordered locus">SeSA_A4599</name>
</gene>
<proteinExistence type="inferred from homology"/>
<sequence>MSIRPLHDRVIVKRKEVESKSAGGIVLTGSAAGKSTRGEIIAVGKGRILDNGTVQPLDVKVGDIVIFNDGYGVKSEKIDNEEVLIMSESDILAIVEA</sequence>
<organism>
    <name type="scientific">Salmonella schwarzengrund (strain CVM19633)</name>
    <dbReference type="NCBI Taxonomy" id="439843"/>
    <lineage>
        <taxon>Bacteria</taxon>
        <taxon>Pseudomonadati</taxon>
        <taxon>Pseudomonadota</taxon>
        <taxon>Gammaproteobacteria</taxon>
        <taxon>Enterobacterales</taxon>
        <taxon>Enterobacteriaceae</taxon>
        <taxon>Salmonella</taxon>
    </lineage>
</organism>
<protein>
    <recommendedName>
        <fullName evidence="1">Co-chaperonin GroES</fullName>
    </recommendedName>
    <alternativeName>
        <fullName evidence="1">10 kDa chaperonin</fullName>
    </alternativeName>
    <alternativeName>
        <fullName evidence="1">Chaperonin-10</fullName>
        <shortName evidence="1">Cpn10</shortName>
    </alternativeName>
</protein>
<dbReference type="EMBL" id="CP001127">
    <property type="protein sequence ID" value="ACF91878.1"/>
    <property type="molecule type" value="Genomic_DNA"/>
</dbReference>
<dbReference type="RefSeq" id="WP_000027827.1">
    <property type="nucleotide sequence ID" value="NC_011094.1"/>
</dbReference>
<dbReference type="SMR" id="B4TSC5"/>
<dbReference type="KEGG" id="sew:SeSA_A4599"/>
<dbReference type="HOGENOM" id="CLU_132825_1_1_6"/>
<dbReference type="Proteomes" id="UP000001865">
    <property type="component" value="Chromosome"/>
</dbReference>
<dbReference type="GO" id="GO:0005737">
    <property type="term" value="C:cytoplasm"/>
    <property type="evidence" value="ECO:0007669"/>
    <property type="project" value="UniProtKB-SubCell"/>
</dbReference>
<dbReference type="GO" id="GO:0005524">
    <property type="term" value="F:ATP binding"/>
    <property type="evidence" value="ECO:0007669"/>
    <property type="project" value="InterPro"/>
</dbReference>
<dbReference type="GO" id="GO:0046872">
    <property type="term" value="F:metal ion binding"/>
    <property type="evidence" value="ECO:0007669"/>
    <property type="project" value="TreeGrafter"/>
</dbReference>
<dbReference type="GO" id="GO:0044183">
    <property type="term" value="F:protein folding chaperone"/>
    <property type="evidence" value="ECO:0007669"/>
    <property type="project" value="InterPro"/>
</dbReference>
<dbReference type="GO" id="GO:0051087">
    <property type="term" value="F:protein-folding chaperone binding"/>
    <property type="evidence" value="ECO:0007669"/>
    <property type="project" value="TreeGrafter"/>
</dbReference>
<dbReference type="GO" id="GO:0051082">
    <property type="term" value="F:unfolded protein binding"/>
    <property type="evidence" value="ECO:0007669"/>
    <property type="project" value="TreeGrafter"/>
</dbReference>
<dbReference type="GO" id="GO:0051085">
    <property type="term" value="P:chaperone cofactor-dependent protein refolding"/>
    <property type="evidence" value="ECO:0007669"/>
    <property type="project" value="TreeGrafter"/>
</dbReference>
<dbReference type="CDD" id="cd00320">
    <property type="entry name" value="cpn10"/>
    <property type="match status" value="1"/>
</dbReference>
<dbReference type="FunFam" id="2.30.33.40:FF:000001">
    <property type="entry name" value="10 kDa chaperonin"/>
    <property type="match status" value="1"/>
</dbReference>
<dbReference type="Gene3D" id="2.30.33.40">
    <property type="entry name" value="GroES chaperonin"/>
    <property type="match status" value="1"/>
</dbReference>
<dbReference type="HAMAP" id="MF_00580">
    <property type="entry name" value="CH10"/>
    <property type="match status" value="1"/>
</dbReference>
<dbReference type="InterPro" id="IPR020818">
    <property type="entry name" value="Chaperonin_GroES"/>
</dbReference>
<dbReference type="InterPro" id="IPR037124">
    <property type="entry name" value="Chaperonin_GroES_sf"/>
</dbReference>
<dbReference type="InterPro" id="IPR018369">
    <property type="entry name" value="Chaprnonin_Cpn10_CS"/>
</dbReference>
<dbReference type="InterPro" id="IPR011032">
    <property type="entry name" value="GroES-like_sf"/>
</dbReference>
<dbReference type="NCBIfam" id="NF001526">
    <property type="entry name" value="PRK00364.1-1"/>
    <property type="match status" value="1"/>
</dbReference>
<dbReference type="NCBIfam" id="NF001527">
    <property type="entry name" value="PRK00364.1-2"/>
    <property type="match status" value="1"/>
</dbReference>
<dbReference type="NCBIfam" id="NF001531">
    <property type="entry name" value="PRK00364.2-2"/>
    <property type="match status" value="1"/>
</dbReference>
<dbReference type="PANTHER" id="PTHR10772">
    <property type="entry name" value="10 KDA HEAT SHOCK PROTEIN"/>
    <property type="match status" value="1"/>
</dbReference>
<dbReference type="PANTHER" id="PTHR10772:SF58">
    <property type="entry name" value="CO-CHAPERONIN GROES"/>
    <property type="match status" value="1"/>
</dbReference>
<dbReference type="Pfam" id="PF00166">
    <property type="entry name" value="Cpn10"/>
    <property type="match status" value="1"/>
</dbReference>
<dbReference type="PRINTS" id="PR00297">
    <property type="entry name" value="CHAPERONIN10"/>
</dbReference>
<dbReference type="SMART" id="SM00883">
    <property type="entry name" value="Cpn10"/>
    <property type="match status" value="1"/>
</dbReference>
<dbReference type="SUPFAM" id="SSF50129">
    <property type="entry name" value="GroES-like"/>
    <property type="match status" value="1"/>
</dbReference>
<dbReference type="PROSITE" id="PS00681">
    <property type="entry name" value="CHAPERONINS_CPN10"/>
    <property type="match status" value="1"/>
</dbReference>
<reference key="1">
    <citation type="journal article" date="2011" name="J. Bacteriol.">
        <title>Comparative genomics of 28 Salmonella enterica isolates: evidence for CRISPR-mediated adaptive sublineage evolution.</title>
        <authorList>
            <person name="Fricke W.F."/>
            <person name="Mammel M.K."/>
            <person name="McDermott P.F."/>
            <person name="Tartera C."/>
            <person name="White D.G."/>
            <person name="Leclerc J.E."/>
            <person name="Ravel J."/>
            <person name="Cebula T.A."/>
        </authorList>
    </citation>
    <scope>NUCLEOTIDE SEQUENCE [LARGE SCALE GENOMIC DNA]</scope>
    <source>
        <strain>CVM19633</strain>
    </source>
</reference>
<accession>B4TSC5</accession>
<feature type="chain" id="PRO_1000129704" description="Co-chaperonin GroES">
    <location>
        <begin position="1"/>
        <end position="97"/>
    </location>
</feature>
<keyword id="KW-0143">Chaperone</keyword>
<keyword id="KW-0963">Cytoplasm</keyword>
<evidence type="ECO:0000255" key="1">
    <source>
        <dbReference type="HAMAP-Rule" id="MF_00580"/>
    </source>
</evidence>
<comment type="function">
    <text evidence="1">Together with the chaperonin GroEL, plays an essential role in assisting protein folding. The GroEL-GroES system forms a nano-cage that allows encapsulation of the non-native substrate proteins and provides a physical environment optimized to promote and accelerate protein folding. GroES binds to the apical surface of the GroEL ring, thereby capping the opening of the GroEL channel.</text>
</comment>
<comment type="subunit">
    <text evidence="1">Heptamer of 7 subunits arranged in a ring. Interacts with the chaperonin GroEL.</text>
</comment>
<comment type="subcellular location">
    <subcellularLocation>
        <location evidence="1">Cytoplasm</location>
    </subcellularLocation>
</comment>
<comment type="similarity">
    <text evidence="1">Belongs to the GroES chaperonin family.</text>
</comment>